<proteinExistence type="inferred from homology"/>
<sequence>MKIAVMGDPDTALGFKLAGAHEVYSFGSSPLEIERANNKLKELVERDDIGIILITETLAQRVEVPEVEFPIILQIPDKSGSRFGEAQLREIVRRAIGVELKR</sequence>
<accession>C5A335</accession>
<reference key="1">
    <citation type="journal article" date="2007" name="Genome Biol.">
        <title>Genome analysis and genome-wide proteomics of Thermococcus gammatolerans, the most radioresistant organism known amongst the Archaea.</title>
        <authorList>
            <person name="Zivanovic Y."/>
            <person name="Armengaud J."/>
            <person name="Lagorce A."/>
            <person name="Leplat C."/>
            <person name="Guerin P."/>
            <person name="Dutertre M."/>
            <person name="Anthouard V."/>
            <person name="Forterre P."/>
            <person name="Wincker P."/>
            <person name="Confalonieri F."/>
        </authorList>
    </citation>
    <scope>NUCLEOTIDE SEQUENCE [LARGE SCALE GENOMIC DNA]</scope>
    <source>
        <strain>DSM 15229 / JCM 11827 / EJ3</strain>
    </source>
</reference>
<organism>
    <name type="scientific">Thermococcus gammatolerans (strain DSM 15229 / JCM 11827 / EJ3)</name>
    <dbReference type="NCBI Taxonomy" id="593117"/>
    <lineage>
        <taxon>Archaea</taxon>
        <taxon>Methanobacteriati</taxon>
        <taxon>Methanobacteriota</taxon>
        <taxon>Thermococci</taxon>
        <taxon>Thermococcales</taxon>
        <taxon>Thermococcaceae</taxon>
        <taxon>Thermococcus</taxon>
    </lineage>
</organism>
<feature type="chain" id="PRO_1000205059" description="A-type ATP synthase subunit F">
    <location>
        <begin position="1"/>
        <end position="102"/>
    </location>
</feature>
<evidence type="ECO:0000255" key="1">
    <source>
        <dbReference type="HAMAP-Rule" id="MF_00312"/>
    </source>
</evidence>
<keyword id="KW-0066">ATP synthesis</keyword>
<keyword id="KW-1003">Cell membrane</keyword>
<keyword id="KW-0375">Hydrogen ion transport</keyword>
<keyword id="KW-0406">Ion transport</keyword>
<keyword id="KW-0472">Membrane</keyword>
<keyword id="KW-1185">Reference proteome</keyword>
<keyword id="KW-0813">Transport</keyword>
<gene>
    <name evidence="1" type="primary">atpF</name>
    <name type="ordered locus">TGAM_0145</name>
</gene>
<name>AATF_THEGJ</name>
<protein>
    <recommendedName>
        <fullName evidence="1">A-type ATP synthase subunit F</fullName>
    </recommendedName>
</protein>
<dbReference type="EMBL" id="CP001398">
    <property type="protein sequence ID" value="ACS32647.1"/>
    <property type="molecule type" value="Genomic_DNA"/>
</dbReference>
<dbReference type="RefSeq" id="WP_015857767.1">
    <property type="nucleotide sequence ID" value="NC_012804.1"/>
</dbReference>
<dbReference type="SMR" id="C5A335"/>
<dbReference type="STRING" id="593117.TGAM_0145"/>
<dbReference type="PaxDb" id="593117-TGAM_0145"/>
<dbReference type="GeneID" id="7988725"/>
<dbReference type="KEGG" id="tga:TGAM_0145"/>
<dbReference type="PATRIC" id="fig|593117.10.peg.148"/>
<dbReference type="eggNOG" id="arCOG04102">
    <property type="taxonomic scope" value="Archaea"/>
</dbReference>
<dbReference type="HOGENOM" id="CLU_135754_2_2_2"/>
<dbReference type="OrthoDB" id="24971at2157"/>
<dbReference type="Proteomes" id="UP000001488">
    <property type="component" value="Chromosome"/>
</dbReference>
<dbReference type="GO" id="GO:0005886">
    <property type="term" value="C:plasma membrane"/>
    <property type="evidence" value="ECO:0007669"/>
    <property type="project" value="UniProtKB-SubCell"/>
</dbReference>
<dbReference type="GO" id="GO:0005524">
    <property type="term" value="F:ATP binding"/>
    <property type="evidence" value="ECO:0007669"/>
    <property type="project" value="UniProtKB-UniRule"/>
</dbReference>
<dbReference type="GO" id="GO:0046933">
    <property type="term" value="F:proton-transporting ATP synthase activity, rotational mechanism"/>
    <property type="evidence" value="ECO:0007669"/>
    <property type="project" value="UniProtKB-UniRule"/>
</dbReference>
<dbReference type="GO" id="GO:0046961">
    <property type="term" value="F:proton-transporting ATPase activity, rotational mechanism"/>
    <property type="evidence" value="ECO:0007669"/>
    <property type="project" value="InterPro"/>
</dbReference>
<dbReference type="GO" id="GO:0042777">
    <property type="term" value="P:proton motive force-driven plasma membrane ATP synthesis"/>
    <property type="evidence" value="ECO:0007669"/>
    <property type="project" value="UniProtKB-UniRule"/>
</dbReference>
<dbReference type="Gene3D" id="3.40.50.10580">
    <property type="entry name" value="ATPase, V1 complex, subunit F"/>
    <property type="match status" value="1"/>
</dbReference>
<dbReference type="HAMAP" id="MF_00312">
    <property type="entry name" value="ATP_synth_F_arch"/>
    <property type="match status" value="1"/>
</dbReference>
<dbReference type="InterPro" id="IPR008218">
    <property type="entry name" value="ATPase_V1-cplx_f_g_su"/>
</dbReference>
<dbReference type="InterPro" id="IPR022944">
    <property type="entry name" value="ATPase_V1-cplx_fsu_bac/arc"/>
</dbReference>
<dbReference type="InterPro" id="IPR036906">
    <property type="entry name" value="ATPase_V1_fsu_sf"/>
</dbReference>
<dbReference type="NCBIfam" id="NF003047">
    <property type="entry name" value="PRK03957.1"/>
    <property type="match status" value="1"/>
</dbReference>
<dbReference type="PANTHER" id="PTHR13861:SF2">
    <property type="entry name" value="V-TYPE PROTON ATPASE SUBUNIT F"/>
    <property type="match status" value="1"/>
</dbReference>
<dbReference type="PANTHER" id="PTHR13861">
    <property type="entry name" value="VACUOLAR ATP SYNTHASE SUBUNIT F"/>
    <property type="match status" value="1"/>
</dbReference>
<dbReference type="Pfam" id="PF01990">
    <property type="entry name" value="ATP-synt_F"/>
    <property type="match status" value="1"/>
</dbReference>
<dbReference type="SUPFAM" id="SSF159468">
    <property type="entry name" value="AtpF-like"/>
    <property type="match status" value="1"/>
</dbReference>
<comment type="function">
    <text evidence="1">Component of the A-type ATP synthase that produces ATP from ADP in the presence of a proton gradient across the membrane.</text>
</comment>
<comment type="subunit">
    <text evidence="1">Has multiple subunits with at least A(3), B(3), C, D, E, F, H, I and proteolipid K(x).</text>
</comment>
<comment type="subcellular location">
    <subcellularLocation>
        <location evidence="1">Cell membrane</location>
        <topology evidence="1">Peripheral membrane protein</topology>
    </subcellularLocation>
</comment>
<comment type="similarity">
    <text evidence="1">Belongs to the V-ATPase F subunit family.</text>
</comment>